<dbReference type="EMBL" id="X58142">
    <property type="protein sequence ID" value="CAA41150.1"/>
    <property type="molecule type" value="Genomic_DNA"/>
</dbReference>
<dbReference type="PIR" id="S15382">
    <property type="entry name" value="S15382"/>
</dbReference>
<dbReference type="SMR" id="P27740"/>
<dbReference type="GO" id="GO:0045735">
    <property type="term" value="F:nutrient reservoir activity"/>
    <property type="evidence" value="ECO:0007669"/>
    <property type="project" value="UniProtKB-KW"/>
</dbReference>
<dbReference type="CDD" id="cd00261">
    <property type="entry name" value="AAI_SS"/>
    <property type="match status" value="1"/>
</dbReference>
<dbReference type="Gene3D" id="1.10.110.10">
    <property type="entry name" value="Plant lipid-transfer and hydrophobic proteins"/>
    <property type="match status" value="1"/>
</dbReference>
<dbReference type="InterPro" id="IPR036312">
    <property type="entry name" value="Bifun_inhib/LTP/seed_sf"/>
</dbReference>
<dbReference type="InterPro" id="IPR016140">
    <property type="entry name" value="Bifunc_inhib/LTP/seed_store"/>
</dbReference>
<dbReference type="InterPro" id="IPR000617">
    <property type="entry name" value="Napin/2SS/CON"/>
</dbReference>
<dbReference type="PANTHER" id="PTHR35496">
    <property type="entry name" value="2S SEED STORAGE PROTEIN 1-RELATED"/>
    <property type="match status" value="1"/>
</dbReference>
<dbReference type="PANTHER" id="PTHR35496:SF9">
    <property type="entry name" value="GENOME ASSEMBLY, CHROMOSOME: A01"/>
    <property type="match status" value="1"/>
</dbReference>
<dbReference type="Pfam" id="PF00234">
    <property type="entry name" value="Tryp_alpha_amyl"/>
    <property type="match status" value="1"/>
</dbReference>
<dbReference type="PRINTS" id="PR00496">
    <property type="entry name" value="NAPIN"/>
</dbReference>
<dbReference type="SMART" id="SM00499">
    <property type="entry name" value="AAI"/>
    <property type="match status" value="1"/>
</dbReference>
<dbReference type="SUPFAM" id="SSF47699">
    <property type="entry name" value="Bifunctional inhibitor/lipid-transfer protein/seed storage 2S albumin"/>
    <property type="match status" value="1"/>
</dbReference>
<comment type="function">
    <text>The small, basic, water-soluble napins are one of the two major kinds of storage proteins synthesized in the seed during its maturation.</text>
</comment>
<comment type="subunit">
    <text>The mature protein consists of a small and a large chain linked by disulfide bonds.</text>
</comment>
<comment type="tissue specificity">
    <text>Cotyledons and the axis.</text>
</comment>
<comment type="similarity">
    <text evidence="2">Belongs to the 2S seed storage albumins family.</text>
</comment>
<sequence length="178" mass="20114">MANKLFLVSATLAFFFLLTNASIYRTVVEFDEDDATNPAGPFRIPKCRKEFQQAQHLKACQQWLHKQAMQSGSGPSWTLDGEFDFEDDMENPQGPQQRPPLLQQCCNELHQEEPLCVCPTLKGASKAVKQQIQQQGQQQGKLQMVSRIYQTATHLPKVCKIPQVSVCPFQKTMPGPSY</sequence>
<organism>
    <name type="scientific">Brassica napus</name>
    <name type="common">Rape</name>
    <dbReference type="NCBI Taxonomy" id="3708"/>
    <lineage>
        <taxon>Eukaryota</taxon>
        <taxon>Viridiplantae</taxon>
        <taxon>Streptophyta</taxon>
        <taxon>Embryophyta</taxon>
        <taxon>Tracheophyta</taxon>
        <taxon>Spermatophyta</taxon>
        <taxon>Magnoliopsida</taxon>
        <taxon>eudicotyledons</taxon>
        <taxon>Gunneridae</taxon>
        <taxon>Pentapetalae</taxon>
        <taxon>rosids</taxon>
        <taxon>malvids</taxon>
        <taxon>Brassicales</taxon>
        <taxon>Brassicaceae</taxon>
        <taxon>Brassiceae</taxon>
        <taxon>Brassica</taxon>
    </lineage>
</organism>
<proteinExistence type="evidence at transcript level"/>
<reference key="1">
    <citation type="journal article" date="1991" name="Eur. J. Biochem.">
        <title>Analysis of the promoter region of napin genes from Brassica napus demonstrates binding of nuclear protein in vitro to a conserved sequence motif.</title>
        <authorList>
            <person name="Ericson M.L."/>
            <person name="Muren E."/>
            <person name="Gustavsson H.O."/>
            <person name="Josefsson L.G."/>
            <person name="Rask L."/>
        </authorList>
    </citation>
    <scope>NUCLEOTIDE SEQUENCE [GENOMIC DNA]</scope>
    <source>
        <strain>cv. Svalofs Karat 20516-K</strain>
    </source>
</reference>
<feature type="signal peptide" evidence="1">
    <location>
        <begin position="1"/>
        <end position="21"/>
    </location>
</feature>
<feature type="propeptide" id="PRO_0000032123" evidence="1">
    <location>
        <begin position="22"/>
        <end position="38"/>
    </location>
</feature>
<feature type="chain" id="PRO_0000032124" description="Napin-B small chain" evidence="1">
    <location>
        <begin position="39"/>
        <end position="74"/>
    </location>
</feature>
<feature type="propeptide" id="PRO_0000032125" evidence="1">
    <location>
        <begin position="75"/>
        <end position="94"/>
    </location>
</feature>
<feature type="chain" id="PRO_0000032126" description="Napin-B large chain" evidence="1">
    <location>
        <begin position="95"/>
        <end position="178"/>
    </location>
</feature>
<accession>P27740</accession>
<name>2SSB_BRANA</name>
<protein>
    <recommendedName>
        <fullName>Napin-B</fullName>
    </recommendedName>
    <alternativeName>
        <fullName>1.7S seed storage protein</fullName>
    </alternativeName>
    <component>
        <recommendedName>
            <fullName>Napin-B small chain</fullName>
        </recommendedName>
    </component>
    <component>
        <recommendedName>
            <fullName>Napin-B large chain</fullName>
        </recommendedName>
    </component>
</protein>
<keyword id="KW-1015">Disulfide bond</keyword>
<keyword id="KW-0708">Seed storage protein</keyword>
<keyword id="KW-0732">Signal</keyword>
<keyword id="KW-0758">Storage protein</keyword>
<gene>
    <name type="primary">NAPB</name>
</gene>
<evidence type="ECO:0000250" key="1"/>
<evidence type="ECO:0000305" key="2"/>